<protein>
    <recommendedName>
        <fullName>SE-cephalotoxin</fullName>
        <shortName>SE-ctx</shortName>
    </recommendedName>
</protein>
<dbReference type="EMBL" id="AB363989">
    <property type="protein sequence ID" value="BAG24412.1"/>
    <property type="molecule type" value="mRNA"/>
</dbReference>
<dbReference type="iPTMnet" id="B2DCR8"/>
<dbReference type="GO" id="GO:0005576">
    <property type="term" value="C:extracellular region"/>
    <property type="evidence" value="ECO:0007669"/>
    <property type="project" value="UniProtKB-SubCell"/>
</dbReference>
<dbReference type="GO" id="GO:0090729">
    <property type="term" value="F:toxin activity"/>
    <property type="evidence" value="ECO:0007669"/>
    <property type="project" value="UniProtKB-KW"/>
</dbReference>
<dbReference type="CDD" id="cd00112">
    <property type="entry name" value="LDLa"/>
    <property type="match status" value="1"/>
</dbReference>
<dbReference type="Gene3D" id="4.10.400.10">
    <property type="entry name" value="Low-density Lipoprotein Receptor"/>
    <property type="match status" value="1"/>
</dbReference>
<dbReference type="Gene3D" id="2.20.100.10">
    <property type="entry name" value="Thrombospondin type-1 (TSP1) repeat"/>
    <property type="match status" value="1"/>
</dbReference>
<dbReference type="InterPro" id="IPR000742">
    <property type="entry name" value="EGF-like_dom"/>
</dbReference>
<dbReference type="InterPro" id="IPR036055">
    <property type="entry name" value="LDL_receptor-like_sf"/>
</dbReference>
<dbReference type="InterPro" id="IPR023415">
    <property type="entry name" value="LDLR_class-A_CS"/>
</dbReference>
<dbReference type="InterPro" id="IPR002172">
    <property type="entry name" value="LDrepeatLR_classA_rpt"/>
</dbReference>
<dbReference type="InterPro" id="IPR039051">
    <property type="entry name" value="SE-CTX-like"/>
</dbReference>
<dbReference type="InterPro" id="IPR000436">
    <property type="entry name" value="Sushi_SCR_CCP_dom"/>
</dbReference>
<dbReference type="InterPro" id="IPR000884">
    <property type="entry name" value="TSP1_rpt"/>
</dbReference>
<dbReference type="InterPro" id="IPR036383">
    <property type="entry name" value="TSP1_rpt_sf"/>
</dbReference>
<dbReference type="PANTHER" id="PTHR40472:SF10">
    <property type="entry name" value="RAPUNZEL 5"/>
    <property type="match status" value="1"/>
</dbReference>
<dbReference type="PANTHER" id="PTHR40472">
    <property type="entry name" value="RICIN B-TYPE LECTIN DOMAIN-CONTAINING PROTEIN"/>
    <property type="match status" value="1"/>
</dbReference>
<dbReference type="Pfam" id="PF00090">
    <property type="entry name" value="TSP_1"/>
    <property type="match status" value="1"/>
</dbReference>
<dbReference type="SMART" id="SM00192">
    <property type="entry name" value="LDLa"/>
    <property type="match status" value="1"/>
</dbReference>
<dbReference type="SMART" id="SM00209">
    <property type="entry name" value="TSP1"/>
    <property type="match status" value="1"/>
</dbReference>
<dbReference type="SUPFAM" id="SSF57196">
    <property type="entry name" value="EGF/Laminin"/>
    <property type="match status" value="1"/>
</dbReference>
<dbReference type="SUPFAM" id="SSF57424">
    <property type="entry name" value="LDL receptor-like module"/>
    <property type="match status" value="1"/>
</dbReference>
<dbReference type="SUPFAM" id="SSF82895">
    <property type="entry name" value="TSP-1 type 1 repeat"/>
    <property type="match status" value="1"/>
</dbReference>
<dbReference type="PROSITE" id="PS00022">
    <property type="entry name" value="EGF_1"/>
    <property type="match status" value="1"/>
</dbReference>
<dbReference type="PROSITE" id="PS50026">
    <property type="entry name" value="EGF_3"/>
    <property type="match status" value="1"/>
</dbReference>
<dbReference type="PROSITE" id="PS01209">
    <property type="entry name" value="LDLRA_1"/>
    <property type="match status" value="1"/>
</dbReference>
<dbReference type="PROSITE" id="PS50068">
    <property type="entry name" value="LDLRA_2"/>
    <property type="match status" value="1"/>
</dbReference>
<dbReference type="PROSITE" id="PS50923">
    <property type="entry name" value="SUSHI"/>
    <property type="match status" value="1"/>
</dbReference>
<dbReference type="PROSITE" id="PS50092">
    <property type="entry name" value="TSP1"/>
    <property type="match status" value="1"/>
</dbReference>
<evidence type="ECO:0000250" key="1"/>
<evidence type="ECO:0000255" key="2"/>
<evidence type="ECO:0000255" key="3">
    <source>
        <dbReference type="PROSITE-ProRule" id="PRU00076"/>
    </source>
</evidence>
<evidence type="ECO:0000255" key="4">
    <source>
        <dbReference type="PROSITE-ProRule" id="PRU00124"/>
    </source>
</evidence>
<evidence type="ECO:0000255" key="5">
    <source>
        <dbReference type="PROSITE-ProRule" id="PRU00210"/>
    </source>
</evidence>
<evidence type="ECO:0000255" key="6">
    <source>
        <dbReference type="PROSITE-ProRule" id="PRU00302"/>
    </source>
</evidence>
<evidence type="ECO:0000269" key="7">
    <source>
    </source>
</evidence>
<reference key="1">
    <citation type="journal article" date="2008" name="Toxicon">
        <title>Purification and molecular cloning of SE-cephalotoxin, a novel proteinaceous toxin from the posterior salivary gland of cuttlefish Sepia esculenta.</title>
        <authorList>
            <person name="Ueda A."/>
            <person name="Nagai H."/>
            <person name="Ishida M."/>
            <person name="Nagashima Y."/>
            <person name="Shiomi K."/>
        </authorList>
    </citation>
    <scope>NUCLEOTIDE SEQUENCE [MRNA]</scope>
    <scope>PROTEIN SEQUENCE OF 30-52; 941-947; 334-345 AND 347-381</scope>
    <scope>SUBUNIT</scope>
    <scope>GLYCOSYLATION AT ASN-41 AND ASN-353</scope>
    <scope>TOXIC DOSE</scope>
    <source>
        <tissue>Posterior salivary gland</tissue>
    </source>
</reference>
<name>CTX_ACAES</name>
<accession>B2DCR8</accession>
<sequence>MMGTSRCVILLFALLLWAANAAPPEIHTTRPNVPEEIKRPNSTEIETPAVKQLETPSIFLLTTLEVAEADVDSTLETMKDRNKKNSAKLSKIGNNMKSLLSVFSVFGGFLSLLSVVTTTSDLQVISDMFTGVNRKLDQINDKLDKLDNSVELQGLLTNYIPWQYSVKNGIEKLIETYKKMVEETDMNKRRLMAENFILFFENNQIESNINNLIKLTTTTDAVHQNMLFNELLDEAGCDIIRLTRIYMHVRRIFYQGTQLVLAYNSFKQMDPPEMKKYLNALIFIRNMYQSRVWHCKETTIAQSKKDIKDIVKTNAKFGITTVLRKINSELSRKYPWYSWSIVTVKKMLANQRNSTLGNQFYEMEAVGPHGSNFVVIWQGFKEHSQCEDIQKANTIAVLTICKSCHQSHVFTPSNMLNKNTCPNNQYPQVKAFIDRREPFRDEIQRKKSDVFWVAAGFKAPGNPCNHGCNGHGECKVVPYTDQFQCFCHGNYEGKMCQKKIQMKRDISKLISDLQTGYKNAFNVPSLTNILIQGENLAKQLKKMIQRIDNQFELTHILVKYISDLQKLDYILKISFNYSKKKITVDAFSRRMKAFLSLNPVDFIFQQLSNAILAEGFTDIQGKDFFNTFKRMIASNRDACTAPYGNEATILLERLSRLDLTAAESILAYYSFESNYLNPANMKRMLENAKQLVRDSKRRMRSYARYWERTSCPPLNVTHLTQTGCGALLSFEGMKVKLSCDGGRAAVPQNIECVNVNGNLQWSATPKCESSWSRWSKWSACASTCGNATQSRRRRCLGQSESEKCIGPSKQVRKCFVEDCCQEKYGKFKCDNNKCISLSRVCDGNDDCRNAEDESKSRCKYLRSGDRIALRNMAYSQEWLSVQYTDAVQADLYYGRAYLNHCIKGDHVTSSEWNSCAGQSLLIYGNYENGKIGKAIRFGDKIAMYYRKTNYHYRWFICYPTYCMTYTCPKKAGSFTFGPNGGCDEYEFYIINYNDKLSRDPVKPGDVITLANNRGSVKGNGYNRNININDCTVKRAQDDRIECNANAWQIFIK</sequence>
<proteinExistence type="evidence at protein level"/>
<comment type="subunit">
    <text evidence="7">Monomer.</text>
</comment>
<comment type="subcellular location">
    <subcellularLocation>
        <location>Secreted</location>
    </subcellularLocation>
</comment>
<comment type="tissue specificity">
    <text>Expressed by the salivary gland.</text>
</comment>
<comment type="toxic dose">
    <text evidence="7">LD(50) is 2 ug/kg against crabs.</text>
</comment>
<feature type="signal peptide" evidence="2">
    <location>
        <begin position="1"/>
        <end position="21"/>
    </location>
</feature>
<feature type="propeptide" id="PRO_0000359437" evidence="7">
    <location>
        <begin position="22"/>
        <end position="29"/>
    </location>
</feature>
<feature type="chain" id="PRO_0000359438" description="SE-cephalotoxin">
    <location>
        <begin position="30"/>
        <end position="1052"/>
    </location>
</feature>
<feature type="domain" description="EGF-like" evidence="3">
    <location>
        <begin position="460"/>
        <end position="497"/>
    </location>
</feature>
<feature type="domain" description="Sushi" evidence="6">
    <location>
        <begin position="709"/>
        <end position="769"/>
    </location>
</feature>
<feature type="domain" description="TSP type-1" evidence="5">
    <location>
        <begin position="768"/>
        <end position="821"/>
    </location>
</feature>
<feature type="domain" description="LDL-receptor class A" evidence="4">
    <location>
        <begin position="819"/>
        <end position="859"/>
    </location>
</feature>
<feature type="coiled-coil region" evidence="2">
    <location>
        <begin position="130"/>
        <end position="194"/>
    </location>
</feature>
<feature type="glycosylation site" description="N-linked (GlcNAc...) asparagine" evidence="7">
    <location>
        <position position="41"/>
    </location>
</feature>
<feature type="glycosylation site" description="N-linked (GlcNAc...) asparagine" evidence="7">
    <location>
        <position position="353"/>
    </location>
</feature>
<feature type="glycosylation site" description="N-linked (GlcNAc...) asparagine" evidence="2">
    <location>
        <position position="576"/>
    </location>
</feature>
<feature type="glycosylation site" description="N-linked (GlcNAc...) asparagine" evidence="2">
    <location>
        <position position="715"/>
    </location>
</feature>
<feature type="glycosylation site" description="N-linked (GlcNAc...) asparagine" evidence="2">
    <location>
        <position position="786"/>
    </location>
</feature>
<feature type="disulfide bond" evidence="1">
    <location>
        <begin position="464"/>
        <end position="474"/>
    </location>
</feature>
<feature type="disulfide bond" evidence="1">
    <location>
        <begin position="468"/>
        <end position="485"/>
    </location>
</feature>
<feature type="disulfide bond" evidence="1">
    <location>
        <begin position="487"/>
        <end position="496"/>
    </location>
</feature>
<feature type="disulfide bond" evidence="1">
    <location>
        <begin position="711"/>
        <end position="752"/>
    </location>
</feature>
<feature type="disulfide bond" evidence="1">
    <location>
        <begin position="739"/>
        <end position="767"/>
    </location>
</feature>
<feature type="disulfide bond" evidence="1">
    <location>
        <begin position="780"/>
        <end position="814"/>
    </location>
</feature>
<feature type="disulfide bond" evidence="1">
    <location>
        <begin position="784"/>
        <end position="820"/>
    </location>
</feature>
<feature type="disulfide bond" evidence="1">
    <location>
        <begin position="795"/>
        <end position="804"/>
    </location>
</feature>
<feature type="disulfide bond" evidence="1">
    <location>
        <begin position="829"/>
        <end position="847"/>
    </location>
</feature>
<feature type="disulfide bond" evidence="1">
    <location>
        <begin position="841"/>
        <end position="858"/>
    </location>
</feature>
<organism>
    <name type="scientific">Acanthosepion esculentum</name>
    <name type="common">Golden cuttlefish</name>
    <name type="synonym">Sepia esculenta</name>
    <dbReference type="NCBI Taxonomy" id="31210"/>
    <lineage>
        <taxon>Eukaryota</taxon>
        <taxon>Metazoa</taxon>
        <taxon>Spiralia</taxon>
        <taxon>Lophotrochozoa</taxon>
        <taxon>Mollusca</taxon>
        <taxon>Cephalopoda</taxon>
        <taxon>Coleoidea</taxon>
        <taxon>Decapodiformes</taxon>
        <taxon>Sepiida</taxon>
        <taxon>Sepiina</taxon>
        <taxon>Sepiidae</taxon>
        <taxon>Acanthosepion</taxon>
    </lineage>
</organism>
<keyword id="KW-0175">Coiled coil</keyword>
<keyword id="KW-0903">Direct protein sequencing</keyword>
<keyword id="KW-1015">Disulfide bond</keyword>
<keyword id="KW-0245">EGF-like domain</keyword>
<keyword id="KW-0325">Glycoprotein</keyword>
<keyword id="KW-0964">Secreted</keyword>
<keyword id="KW-0732">Signal</keyword>
<keyword id="KW-0768">Sushi</keyword>
<keyword id="KW-0800">Toxin</keyword>